<dbReference type="EC" id="2.6.1.52" evidence="1"/>
<dbReference type="EMBL" id="BX950851">
    <property type="protein sequence ID" value="CAG75493.1"/>
    <property type="molecule type" value="Genomic_DNA"/>
</dbReference>
<dbReference type="RefSeq" id="WP_011094138.1">
    <property type="nucleotide sequence ID" value="NC_004547.2"/>
</dbReference>
<dbReference type="SMR" id="Q6D400"/>
<dbReference type="STRING" id="218491.ECA2594"/>
<dbReference type="KEGG" id="eca:ECA2594"/>
<dbReference type="PATRIC" id="fig|218491.5.peg.2628"/>
<dbReference type="eggNOG" id="COG1932">
    <property type="taxonomic scope" value="Bacteria"/>
</dbReference>
<dbReference type="HOGENOM" id="CLU_034866_0_2_6"/>
<dbReference type="OrthoDB" id="9809412at2"/>
<dbReference type="UniPathway" id="UPA00135">
    <property type="reaction ID" value="UER00197"/>
</dbReference>
<dbReference type="UniPathway" id="UPA00244">
    <property type="reaction ID" value="UER00311"/>
</dbReference>
<dbReference type="Proteomes" id="UP000007966">
    <property type="component" value="Chromosome"/>
</dbReference>
<dbReference type="GO" id="GO:0005737">
    <property type="term" value="C:cytoplasm"/>
    <property type="evidence" value="ECO:0007669"/>
    <property type="project" value="UniProtKB-SubCell"/>
</dbReference>
<dbReference type="GO" id="GO:0004648">
    <property type="term" value="F:O-phospho-L-serine:2-oxoglutarate aminotransferase activity"/>
    <property type="evidence" value="ECO:0007669"/>
    <property type="project" value="UniProtKB-UniRule"/>
</dbReference>
<dbReference type="GO" id="GO:0030170">
    <property type="term" value="F:pyridoxal phosphate binding"/>
    <property type="evidence" value="ECO:0007669"/>
    <property type="project" value="UniProtKB-UniRule"/>
</dbReference>
<dbReference type="GO" id="GO:0006564">
    <property type="term" value="P:L-serine biosynthetic process"/>
    <property type="evidence" value="ECO:0007669"/>
    <property type="project" value="UniProtKB-UniRule"/>
</dbReference>
<dbReference type="GO" id="GO:0008615">
    <property type="term" value="P:pyridoxine biosynthetic process"/>
    <property type="evidence" value="ECO:0007669"/>
    <property type="project" value="UniProtKB-UniRule"/>
</dbReference>
<dbReference type="CDD" id="cd00611">
    <property type="entry name" value="PSAT_like"/>
    <property type="match status" value="1"/>
</dbReference>
<dbReference type="FunFam" id="3.40.640.10:FF:000010">
    <property type="entry name" value="Phosphoserine aminotransferase"/>
    <property type="match status" value="1"/>
</dbReference>
<dbReference type="FunFam" id="3.90.1150.10:FF:000006">
    <property type="entry name" value="Phosphoserine aminotransferase"/>
    <property type="match status" value="1"/>
</dbReference>
<dbReference type="Gene3D" id="3.90.1150.10">
    <property type="entry name" value="Aspartate Aminotransferase, domain 1"/>
    <property type="match status" value="1"/>
</dbReference>
<dbReference type="Gene3D" id="3.40.640.10">
    <property type="entry name" value="Type I PLP-dependent aspartate aminotransferase-like (Major domain)"/>
    <property type="match status" value="1"/>
</dbReference>
<dbReference type="HAMAP" id="MF_00160">
    <property type="entry name" value="SerC_aminotrans_5"/>
    <property type="match status" value="1"/>
</dbReference>
<dbReference type="InterPro" id="IPR000192">
    <property type="entry name" value="Aminotrans_V_dom"/>
</dbReference>
<dbReference type="InterPro" id="IPR020578">
    <property type="entry name" value="Aminotrans_V_PyrdxlP_BS"/>
</dbReference>
<dbReference type="InterPro" id="IPR022278">
    <property type="entry name" value="Pser_aminoTfrase"/>
</dbReference>
<dbReference type="InterPro" id="IPR015424">
    <property type="entry name" value="PyrdxlP-dep_Trfase"/>
</dbReference>
<dbReference type="InterPro" id="IPR015421">
    <property type="entry name" value="PyrdxlP-dep_Trfase_major"/>
</dbReference>
<dbReference type="InterPro" id="IPR015422">
    <property type="entry name" value="PyrdxlP-dep_Trfase_small"/>
</dbReference>
<dbReference type="NCBIfam" id="NF003764">
    <property type="entry name" value="PRK05355.1"/>
    <property type="match status" value="1"/>
</dbReference>
<dbReference type="NCBIfam" id="TIGR01364">
    <property type="entry name" value="serC_1"/>
    <property type="match status" value="1"/>
</dbReference>
<dbReference type="PANTHER" id="PTHR43247">
    <property type="entry name" value="PHOSPHOSERINE AMINOTRANSFERASE"/>
    <property type="match status" value="1"/>
</dbReference>
<dbReference type="PANTHER" id="PTHR43247:SF1">
    <property type="entry name" value="PHOSPHOSERINE AMINOTRANSFERASE"/>
    <property type="match status" value="1"/>
</dbReference>
<dbReference type="Pfam" id="PF00266">
    <property type="entry name" value="Aminotran_5"/>
    <property type="match status" value="1"/>
</dbReference>
<dbReference type="PIRSF" id="PIRSF000525">
    <property type="entry name" value="SerC"/>
    <property type="match status" value="1"/>
</dbReference>
<dbReference type="SUPFAM" id="SSF53383">
    <property type="entry name" value="PLP-dependent transferases"/>
    <property type="match status" value="1"/>
</dbReference>
<dbReference type="PROSITE" id="PS00595">
    <property type="entry name" value="AA_TRANSFER_CLASS_5"/>
    <property type="match status" value="1"/>
</dbReference>
<evidence type="ECO:0000255" key="1">
    <source>
        <dbReference type="HAMAP-Rule" id="MF_00160"/>
    </source>
</evidence>
<protein>
    <recommendedName>
        <fullName evidence="1">Phosphoserine aminotransferase</fullName>
        <ecNumber evidence="1">2.6.1.52</ecNumber>
    </recommendedName>
    <alternativeName>
        <fullName evidence="1">Phosphohydroxythreonine aminotransferase</fullName>
        <shortName evidence="1">PSAT</shortName>
    </alternativeName>
</protein>
<reference key="1">
    <citation type="journal article" date="2004" name="Proc. Natl. Acad. Sci. U.S.A.">
        <title>Genome sequence of the enterobacterial phytopathogen Erwinia carotovora subsp. atroseptica and characterization of virulence factors.</title>
        <authorList>
            <person name="Bell K.S."/>
            <person name="Sebaihia M."/>
            <person name="Pritchard L."/>
            <person name="Holden M.T.G."/>
            <person name="Hyman L.J."/>
            <person name="Holeva M.C."/>
            <person name="Thomson N.R."/>
            <person name="Bentley S.D."/>
            <person name="Churcher L.J.C."/>
            <person name="Mungall K."/>
            <person name="Atkin R."/>
            <person name="Bason N."/>
            <person name="Brooks K."/>
            <person name="Chillingworth T."/>
            <person name="Clark K."/>
            <person name="Doggett J."/>
            <person name="Fraser A."/>
            <person name="Hance Z."/>
            <person name="Hauser H."/>
            <person name="Jagels K."/>
            <person name="Moule S."/>
            <person name="Norbertczak H."/>
            <person name="Ormond D."/>
            <person name="Price C."/>
            <person name="Quail M.A."/>
            <person name="Sanders M."/>
            <person name="Walker D."/>
            <person name="Whitehead S."/>
            <person name="Salmond G.P.C."/>
            <person name="Birch P.R.J."/>
            <person name="Parkhill J."/>
            <person name="Toth I.K."/>
        </authorList>
    </citation>
    <scope>NUCLEOTIDE SEQUENCE [LARGE SCALE GENOMIC DNA]</scope>
    <source>
        <strain>SCRI 1043 / ATCC BAA-672</strain>
    </source>
</reference>
<feature type="chain" id="PRO_0000150171" description="Phosphoserine aminotransferase">
    <location>
        <begin position="1"/>
        <end position="361"/>
    </location>
</feature>
<feature type="binding site" evidence="1">
    <location>
        <position position="42"/>
    </location>
    <ligand>
        <name>L-glutamate</name>
        <dbReference type="ChEBI" id="CHEBI:29985"/>
    </ligand>
</feature>
<feature type="binding site" evidence="1">
    <location>
        <begin position="76"/>
        <end position="77"/>
    </location>
    <ligand>
        <name>pyridoxal 5'-phosphate</name>
        <dbReference type="ChEBI" id="CHEBI:597326"/>
    </ligand>
</feature>
<feature type="binding site" evidence="1">
    <location>
        <position position="102"/>
    </location>
    <ligand>
        <name>pyridoxal 5'-phosphate</name>
        <dbReference type="ChEBI" id="CHEBI:597326"/>
    </ligand>
</feature>
<feature type="binding site" evidence="1">
    <location>
        <position position="153"/>
    </location>
    <ligand>
        <name>pyridoxal 5'-phosphate</name>
        <dbReference type="ChEBI" id="CHEBI:597326"/>
    </ligand>
</feature>
<feature type="binding site" evidence="1">
    <location>
        <position position="173"/>
    </location>
    <ligand>
        <name>pyridoxal 5'-phosphate</name>
        <dbReference type="ChEBI" id="CHEBI:597326"/>
    </ligand>
</feature>
<feature type="binding site" evidence="1">
    <location>
        <position position="196"/>
    </location>
    <ligand>
        <name>pyridoxal 5'-phosphate</name>
        <dbReference type="ChEBI" id="CHEBI:597326"/>
    </ligand>
</feature>
<feature type="binding site" evidence="1">
    <location>
        <begin position="238"/>
        <end position="239"/>
    </location>
    <ligand>
        <name>pyridoxal 5'-phosphate</name>
        <dbReference type="ChEBI" id="CHEBI:597326"/>
    </ligand>
</feature>
<feature type="modified residue" description="N6-(pyridoxal phosphate)lysine" evidence="1">
    <location>
        <position position="197"/>
    </location>
</feature>
<organism>
    <name type="scientific">Pectobacterium atrosepticum (strain SCRI 1043 / ATCC BAA-672)</name>
    <name type="common">Erwinia carotovora subsp. atroseptica</name>
    <dbReference type="NCBI Taxonomy" id="218491"/>
    <lineage>
        <taxon>Bacteria</taxon>
        <taxon>Pseudomonadati</taxon>
        <taxon>Pseudomonadota</taxon>
        <taxon>Gammaproteobacteria</taxon>
        <taxon>Enterobacterales</taxon>
        <taxon>Pectobacteriaceae</taxon>
        <taxon>Pectobacterium</taxon>
    </lineage>
</organism>
<gene>
    <name evidence="1" type="primary">serC</name>
    <name type="ordered locus">ECA2594</name>
</gene>
<proteinExistence type="inferred from homology"/>
<comment type="function">
    <text evidence="1">Catalyzes the reversible conversion of 3-phosphohydroxypyruvate to phosphoserine and of 3-hydroxy-2-oxo-4-phosphonooxybutanoate to phosphohydroxythreonine.</text>
</comment>
<comment type="catalytic activity">
    <reaction evidence="1">
        <text>O-phospho-L-serine + 2-oxoglutarate = 3-phosphooxypyruvate + L-glutamate</text>
        <dbReference type="Rhea" id="RHEA:14329"/>
        <dbReference type="ChEBI" id="CHEBI:16810"/>
        <dbReference type="ChEBI" id="CHEBI:18110"/>
        <dbReference type="ChEBI" id="CHEBI:29985"/>
        <dbReference type="ChEBI" id="CHEBI:57524"/>
        <dbReference type="EC" id="2.6.1.52"/>
    </reaction>
</comment>
<comment type="catalytic activity">
    <reaction evidence="1">
        <text>4-(phosphooxy)-L-threonine + 2-oxoglutarate = (R)-3-hydroxy-2-oxo-4-phosphooxybutanoate + L-glutamate</text>
        <dbReference type="Rhea" id="RHEA:16573"/>
        <dbReference type="ChEBI" id="CHEBI:16810"/>
        <dbReference type="ChEBI" id="CHEBI:29985"/>
        <dbReference type="ChEBI" id="CHEBI:58452"/>
        <dbReference type="ChEBI" id="CHEBI:58538"/>
        <dbReference type="EC" id="2.6.1.52"/>
    </reaction>
</comment>
<comment type="cofactor">
    <cofactor evidence="1">
        <name>pyridoxal 5'-phosphate</name>
        <dbReference type="ChEBI" id="CHEBI:597326"/>
    </cofactor>
    <text evidence="1">Binds 1 pyridoxal phosphate per subunit.</text>
</comment>
<comment type="pathway">
    <text evidence="1">Amino-acid biosynthesis; L-serine biosynthesis; L-serine from 3-phospho-D-glycerate: step 2/3.</text>
</comment>
<comment type="pathway">
    <text evidence="1">Cofactor biosynthesis; pyridoxine 5'-phosphate biosynthesis; pyridoxine 5'-phosphate from D-erythrose 4-phosphate: step 3/5.</text>
</comment>
<comment type="subunit">
    <text evidence="1">Homodimer.</text>
</comment>
<comment type="subcellular location">
    <subcellularLocation>
        <location evidence="1">Cytoplasm</location>
    </subcellularLocation>
</comment>
<comment type="similarity">
    <text evidence="1">Belongs to the class-V pyridoxal-phosphate-dependent aminotransferase family. SerC subfamily.</text>
</comment>
<name>SERC_PECAS</name>
<sequence>MTQIFNFSAGPAMLPVEVLRRAEQELCNWNGLGTSVMEISHRSKEFMQVAAESEQDLRDLLKIPSNYKVLFCHGGARAQFAAVPLNLLGERSTADYIDGGYWAHSAINEAEKYCTPNVIDVKTRIDDLRGIKPMREWKLSDDAAFVHYCPNETIDGIAIEEEPDFGDKIVVADYSSSILSRRIDVSRYGVIYAGAQKNIGPAGLTLVIVREDLLGKARRELPSILDYQVLADNDSMFNTPPTFAWYLSGMVFKWLKEHGGLAEMEKRNQEKADLLYSAIDGNDFYRNDVALANRSRMNVPFLLADSALDKVFLEESVAAGLHALKGHRVVGGMRASIYNAMPLEGVKALTEFMADFARRHG</sequence>
<keyword id="KW-0028">Amino-acid biosynthesis</keyword>
<keyword id="KW-0032">Aminotransferase</keyword>
<keyword id="KW-0963">Cytoplasm</keyword>
<keyword id="KW-0663">Pyridoxal phosphate</keyword>
<keyword id="KW-0664">Pyridoxine biosynthesis</keyword>
<keyword id="KW-1185">Reference proteome</keyword>
<keyword id="KW-0718">Serine biosynthesis</keyword>
<keyword id="KW-0808">Transferase</keyword>
<accession>Q6D400</accession>